<proteinExistence type="inferred from homology"/>
<protein>
    <recommendedName>
        <fullName evidence="1">Arginine--tRNA ligase</fullName>
        <ecNumber evidence="1">6.1.1.19</ecNumber>
    </recommendedName>
    <alternativeName>
        <fullName evidence="1">Arginyl-tRNA synthetase</fullName>
        <shortName evidence="1">ArgRS</shortName>
    </alternativeName>
</protein>
<keyword id="KW-0030">Aminoacyl-tRNA synthetase</keyword>
<keyword id="KW-0067">ATP-binding</keyword>
<keyword id="KW-0963">Cytoplasm</keyword>
<keyword id="KW-0436">Ligase</keyword>
<keyword id="KW-0547">Nucleotide-binding</keyword>
<keyword id="KW-0648">Protein biosynthesis</keyword>
<comment type="catalytic activity">
    <reaction evidence="1">
        <text>tRNA(Arg) + L-arginine + ATP = L-arginyl-tRNA(Arg) + AMP + diphosphate</text>
        <dbReference type="Rhea" id="RHEA:20301"/>
        <dbReference type="Rhea" id="RHEA-COMP:9658"/>
        <dbReference type="Rhea" id="RHEA-COMP:9673"/>
        <dbReference type="ChEBI" id="CHEBI:30616"/>
        <dbReference type="ChEBI" id="CHEBI:32682"/>
        <dbReference type="ChEBI" id="CHEBI:33019"/>
        <dbReference type="ChEBI" id="CHEBI:78442"/>
        <dbReference type="ChEBI" id="CHEBI:78513"/>
        <dbReference type="ChEBI" id="CHEBI:456215"/>
        <dbReference type="EC" id="6.1.1.19"/>
    </reaction>
</comment>
<comment type="subunit">
    <text evidence="1">Monomer.</text>
</comment>
<comment type="subcellular location">
    <subcellularLocation>
        <location evidence="1">Cytoplasm</location>
    </subcellularLocation>
</comment>
<comment type="similarity">
    <text evidence="1">Belongs to the class-I aminoacyl-tRNA synthetase family.</text>
</comment>
<feature type="chain" id="PRO_1000095361" description="Arginine--tRNA ligase">
    <location>
        <begin position="1"/>
        <end position="577"/>
    </location>
</feature>
<feature type="short sequence motif" description="'HIGH' region">
    <location>
        <begin position="122"/>
        <end position="132"/>
    </location>
</feature>
<sequence>MNIQALLSEKVRQAMIAAGAPADCEPQVRQSAKVQFGDYQANGMMAVAKKLGMAPRQLAEQVLTHLDLNGIASKVEIAGPGFINIFLDPAFLAEHVQQALASDRLGVATPEKQTIVVDYSAPNVAKEMHVGHLRSTIIGDAAVRTLEFLGHKVIRANHVGDWGTQFGMLIAWLEKQQQENAGEMELADLEGFYRDAKKHYDEDEEFAERARNYVVKLQSGDEYFREMWRKLVDITMTQNQITYDRLNVTLTRDDVMGESLYNPMLPGIVADLKAKGLAVESEGATVVFLDEFKNKEGEPMGVIIQKKDGGYLYTTTDIACAKYRYETLHADRVLYYIDSRQHQHLMQAWAIVRKAGYVPESVPLEHHMFGMMLGKDGKPFKTRAGGTVKLADLLDEALERARRLVAEKNPDMPADELEKLANAVGIGAVKYADLSKNRTTDYIFDWDNMLAFEGNTAPYMQYAYTRVLSVFRKAEIDEEQLAAAPVIIREDREAQLAARLLQFEETLTVVAREGTPHVMCAYLYDLAGLFSGFYEHCPILSAENEEVRNSRLKLAQLTAKTLKLGLDTLGIETVERM</sequence>
<organism>
    <name type="scientific">Escherichia coli (strain K12 / DH10B)</name>
    <dbReference type="NCBI Taxonomy" id="316385"/>
    <lineage>
        <taxon>Bacteria</taxon>
        <taxon>Pseudomonadati</taxon>
        <taxon>Pseudomonadota</taxon>
        <taxon>Gammaproteobacteria</taxon>
        <taxon>Enterobacterales</taxon>
        <taxon>Enterobacteriaceae</taxon>
        <taxon>Escherichia</taxon>
    </lineage>
</organism>
<reference key="1">
    <citation type="journal article" date="2008" name="J. Bacteriol.">
        <title>The complete genome sequence of Escherichia coli DH10B: insights into the biology of a laboratory workhorse.</title>
        <authorList>
            <person name="Durfee T."/>
            <person name="Nelson R."/>
            <person name="Baldwin S."/>
            <person name="Plunkett G. III"/>
            <person name="Burland V."/>
            <person name="Mau B."/>
            <person name="Petrosino J.F."/>
            <person name="Qin X."/>
            <person name="Muzny D.M."/>
            <person name="Ayele M."/>
            <person name="Gibbs R.A."/>
            <person name="Csorgo B."/>
            <person name="Posfai G."/>
            <person name="Weinstock G.M."/>
            <person name="Blattner F.R."/>
        </authorList>
    </citation>
    <scope>NUCLEOTIDE SEQUENCE [LARGE SCALE GENOMIC DNA]</scope>
    <source>
        <strain>K12 / DH10B</strain>
    </source>
</reference>
<name>SYR_ECODH</name>
<dbReference type="EC" id="6.1.1.19" evidence="1"/>
<dbReference type="EMBL" id="CP000948">
    <property type="protein sequence ID" value="ACB03074.1"/>
    <property type="molecule type" value="Genomic_DNA"/>
</dbReference>
<dbReference type="RefSeq" id="WP_001025322.1">
    <property type="nucleotide sequence ID" value="NC_010473.1"/>
</dbReference>
<dbReference type="SMR" id="B1XHE4"/>
<dbReference type="GeneID" id="75171948"/>
<dbReference type="KEGG" id="ecd:ECDH10B_2017"/>
<dbReference type="HOGENOM" id="CLU_006406_5_1_6"/>
<dbReference type="BRENDA" id="6.1.1.19">
    <property type="organism ID" value="2026"/>
</dbReference>
<dbReference type="GO" id="GO:0005737">
    <property type="term" value="C:cytoplasm"/>
    <property type="evidence" value="ECO:0007669"/>
    <property type="project" value="UniProtKB-SubCell"/>
</dbReference>
<dbReference type="GO" id="GO:0004814">
    <property type="term" value="F:arginine-tRNA ligase activity"/>
    <property type="evidence" value="ECO:0007669"/>
    <property type="project" value="UniProtKB-UniRule"/>
</dbReference>
<dbReference type="GO" id="GO:0005524">
    <property type="term" value="F:ATP binding"/>
    <property type="evidence" value="ECO:0007669"/>
    <property type="project" value="UniProtKB-UniRule"/>
</dbReference>
<dbReference type="GO" id="GO:0006420">
    <property type="term" value="P:arginyl-tRNA aminoacylation"/>
    <property type="evidence" value="ECO:0007669"/>
    <property type="project" value="UniProtKB-UniRule"/>
</dbReference>
<dbReference type="CDD" id="cd07956">
    <property type="entry name" value="Anticodon_Ia_Arg"/>
    <property type="match status" value="1"/>
</dbReference>
<dbReference type="CDD" id="cd00671">
    <property type="entry name" value="ArgRS_core"/>
    <property type="match status" value="1"/>
</dbReference>
<dbReference type="FunFam" id="1.10.730.10:FF:000001">
    <property type="entry name" value="Arginine--tRNA ligase"/>
    <property type="match status" value="1"/>
</dbReference>
<dbReference type="FunFam" id="3.30.1360.70:FF:000001">
    <property type="entry name" value="Arginine--tRNA ligase"/>
    <property type="match status" value="1"/>
</dbReference>
<dbReference type="FunFam" id="3.40.50.620:FF:000030">
    <property type="entry name" value="Arginine--tRNA ligase"/>
    <property type="match status" value="1"/>
</dbReference>
<dbReference type="Gene3D" id="3.30.1360.70">
    <property type="entry name" value="Arginyl tRNA synthetase N-terminal domain"/>
    <property type="match status" value="1"/>
</dbReference>
<dbReference type="Gene3D" id="3.40.50.620">
    <property type="entry name" value="HUPs"/>
    <property type="match status" value="1"/>
</dbReference>
<dbReference type="Gene3D" id="1.10.730.10">
    <property type="entry name" value="Isoleucyl-tRNA Synthetase, Domain 1"/>
    <property type="match status" value="1"/>
</dbReference>
<dbReference type="HAMAP" id="MF_00123">
    <property type="entry name" value="Arg_tRNA_synth"/>
    <property type="match status" value="1"/>
</dbReference>
<dbReference type="InterPro" id="IPR001412">
    <property type="entry name" value="aa-tRNA-synth_I_CS"/>
</dbReference>
<dbReference type="InterPro" id="IPR001278">
    <property type="entry name" value="Arg-tRNA-ligase"/>
</dbReference>
<dbReference type="InterPro" id="IPR005148">
    <property type="entry name" value="Arg-tRNA-synth_N"/>
</dbReference>
<dbReference type="InterPro" id="IPR036695">
    <property type="entry name" value="Arg-tRNA-synth_N_sf"/>
</dbReference>
<dbReference type="InterPro" id="IPR035684">
    <property type="entry name" value="ArgRS_core"/>
</dbReference>
<dbReference type="InterPro" id="IPR008909">
    <property type="entry name" value="DALR_anticod-bd"/>
</dbReference>
<dbReference type="InterPro" id="IPR014729">
    <property type="entry name" value="Rossmann-like_a/b/a_fold"/>
</dbReference>
<dbReference type="InterPro" id="IPR009080">
    <property type="entry name" value="tRNAsynth_Ia_anticodon-bd"/>
</dbReference>
<dbReference type="NCBIfam" id="TIGR00456">
    <property type="entry name" value="argS"/>
    <property type="match status" value="1"/>
</dbReference>
<dbReference type="PANTHER" id="PTHR11956:SF5">
    <property type="entry name" value="ARGININE--TRNA LIGASE, CYTOPLASMIC"/>
    <property type="match status" value="1"/>
</dbReference>
<dbReference type="PANTHER" id="PTHR11956">
    <property type="entry name" value="ARGINYL-TRNA SYNTHETASE"/>
    <property type="match status" value="1"/>
</dbReference>
<dbReference type="Pfam" id="PF03485">
    <property type="entry name" value="Arg_tRNA_synt_N"/>
    <property type="match status" value="1"/>
</dbReference>
<dbReference type="Pfam" id="PF05746">
    <property type="entry name" value="DALR_1"/>
    <property type="match status" value="1"/>
</dbReference>
<dbReference type="Pfam" id="PF00750">
    <property type="entry name" value="tRNA-synt_1d"/>
    <property type="match status" value="1"/>
</dbReference>
<dbReference type="PRINTS" id="PR01038">
    <property type="entry name" value="TRNASYNTHARG"/>
</dbReference>
<dbReference type="SMART" id="SM01016">
    <property type="entry name" value="Arg_tRNA_synt_N"/>
    <property type="match status" value="1"/>
</dbReference>
<dbReference type="SMART" id="SM00836">
    <property type="entry name" value="DALR_1"/>
    <property type="match status" value="1"/>
</dbReference>
<dbReference type="SUPFAM" id="SSF47323">
    <property type="entry name" value="Anticodon-binding domain of a subclass of class I aminoacyl-tRNA synthetases"/>
    <property type="match status" value="1"/>
</dbReference>
<dbReference type="SUPFAM" id="SSF55190">
    <property type="entry name" value="Arginyl-tRNA synthetase (ArgRS), N-terminal 'additional' domain"/>
    <property type="match status" value="1"/>
</dbReference>
<dbReference type="SUPFAM" id="SSF52374">
    <property type="entry name" value="Nucleotidylyl transferase"/>
    <property type="match status" value="1"/>
</dbReference>
<dbReference type="PROSITE" id="PS00178">
    <property type="entry name" value="AA_TRNA_LIGASE_I"/>
    <property type="match status" value="1"/>
</dbReference>
<accession>B1XHE4</accession>
<evidence type="ECO:0000255" key="1">
    <source>
        <dbReference type="HAMAP-Rule" id="MF_00123"/>
    </source>
</evidence>
<gene>
    <name evidence="1" type="primary">argS</name>
    <name type="ordered locus">ECDH10B_2017</name>
</gene>